<name>RSMH_HELHP</name>
<sequence>MKHYSVLKNEMIQALDCLKEDSILIDCTLGFGGHTIGALQAYPNIEVYAFDKDIYALNLAKERLKPYLQNIHFCHNAFSQFLDIVPNVVLPRVRGIIADIGVSSMQLDETQRGFSFVSSTLDMRMDTRADLNATKVINTYSPIRLEEIFRIYGEVRQSKKLAEIIAYERKKKPFSSCLELSTLIEQHFPRVGGIHPATLAFQALRIEVNDELGELKRLLHNIELAFDEGKIASCRVGIISFHSLEDRIIKQCFKQWSKSCICAEESLRCECGNNHAKGQILTKKPIIPTPQEIAQNKRSRSAKLRIFELKSSKDKGV</sequence>
<comment type="function">
    <text evidence="1">Specifically methylates the N4 position of cytidine in position 1402 (C1402) of 16S rRNA.</text>
</comment>
<comment type="catalytic activity">
    <reaction evidence="1">
        <text>cytidine(1402) in 16S rRNA + S-adenosyl-L-methionine = N(4)-methylcytidine(1402) in 16S rRNA + S-adenosyl-L-homocysteine + H(+)</text>
        <dbReference type="Rhea" id="RHEA:42928"/>
        <dbReference type="Rhea" id="RHEA-COMP:10286"/>
        <dbReference type="Rhea" id="RHEA-COMP:10287"/>
        <dbReference type="ChEBI" id="CHEBI:15378"/>
        <dbReference type="ChEBI" id="CHEBI:57856"/>
        <dbReference type="ChEBI" id="CHEBI:59789"/>
        <dbReference type="ChEBI" id="CHEBI:74506"/>
        <dbReference type="ChEBI" id="CHEBI:82748"/>
        <dbReference type="EC" id="2.1.1.199"/>
    </reaction>
</comment>
<comment type="subcellular location">
    <subcellularLocation>
        <location evidence="1">Cytoplasm</location>
    </subcellularLocation>
</comment>
<comment type="similarity">
    <text evidence="1">Belongs to the methyltransferase superfamily. RsmH family.</text>
</comment>
<keyword id="KW-0963">Cytoplasm</keyword>
<keyword id="KW-0489">Methyltransferase</keyword>
<keyword id="KW-1185">Reference proteome</keyword>
<keyword id="KW-0698">rRNA processing</keyword>
<keyword id="KW-0949">S-adenosyl-L-methionine</keyword>
<keyword id="KW-0808">Transferase</keyword>
<evidence type="ECO:0000255" key="1">
    <source>
        <dbReference type="HAMAP-Rule" id="MF_01007"/>
    </source>
</evidence>
<gene>
    <name evidence="1" type="primary">rsmH</name>
    <name type="synonym">mraW</name>
    <name type="ordered locus">HH_1279</name>
</gene>
<reference key="1">
    <citation type="journal article" date="2003" name="Proc. Natl. Acad. Sci. U.S.A.">
        <title>The complete genome sequence of the carcinogenic bacterium Helicobacter hepaticus.</title>
        <authorList>
            <person name="Suerbaum S."/>
            <person name="Josenhans C."/>
            <person name="Sterzenbach T."/>
            <person name="Drescher B."/>
            <person name="Brandt P."/>
            <person name="Bell M."/>
            <person name="Droege M."/>
            <person name="Fartmann B."/>
            <person name="Fischer H.-P."/>
            <person name="Ge Z."/>
            <person name="Hoerster A."/>
            <person name="Holland R."/>
            <person name="Klein K."/>
            <person name="Koenig J."/>
            <person name="Macko L."/>
            <person name="Mendz G.L."/>
            <person name="Nyakatura G."/>
            <person name="Schauer D.B."/>
            <person name="Shen Z."/>
            <person name="Weber J."/>
            <person name="Frosch M."/>
            <person name="Fox J.G."/>
        </authorList>
    </citation>
    <scope>NUCLEOTIDE SEQUENCE [LARGE SCALE GENOMIC DNA]</scope>
    <source>
        <strain>ATCC 51449 / 3B1</strain>
    </source>
</reference>
<accession>Q7VGP1</accession>
<dbReference type="EC" id="2.1.1.199" evidence="1"/>
<dbReference type="EMBL" id="AE017125">
    <property type="protein sequence ID" value="AAP77876.1"/>
    <property type="molecule type" value="Genomic_DNA"/>
</dbReference>
<dbReference type="RefSeq" id="WP_011116119.1">
    <property type="nucleotide sequence ID" value="NC_004917.1"/>
</dbReference>
<dbReference type="SMR" id="Q7VGP1"/>
<dbReference type="STRING" id="235279.HH_1279"/>
<dbReference type="KEGG" id="hhe:HH_1279"/>
<dbReference type="eggNOG" id="COG0275">
    <property type="taxonomic scope" value="Bacteria"/>
</dbReference>
<dbReference type="HOGENOM" id="CLU_038422_3_0_7"/>
<dbReference type="OrthoDB" id="9806637at2"/>
<dbReference type="Proteomes" id="UP000002495">
    <property type="component" value="Chromosome"/>
</dbReference>
<dbReference type="GO" id="GO:0005737">
    <property type="term" value="C:cytoplasm"/>
    <property type="evidence" value="ECO:0007669"/>
    <property type="project" value="UniProtKB-SubCell"/>
</dbReference>
<dbReference type="GO" id="GO:0071424">
    <property type="term" value="F:rRNA (cytosine-N4-)-methyltransferase activity"/>
    <property type="evidence" value="ECO:0007669"/>
    <property type="project" value="UniProtKB-UniRule"/>
</dbReference>
<dbReference type="GO" id="GO:0070475">
    <property type="term" value="P:rRNA base methylation"/>
    <property type="evidence" value="ECO:0007669"/>
    <property type="project" value="UniProtKB-UniRule"/>
</dbReference>
<dbReference type="Gene3D" id="1.10.150.170">
    <property type="entry name" value="Putative methyltransferase TM0872, insert domain"/>
    <property type="match status" value="1"/>
</dbReference>
<dbReference type="Gene3D" id="3.40.50.150">
    <property type="entry name" value="Vaccinia Virus protein VP39"/>
    <property type="match status" value="1"/>
</dbReference>
<dbReference type="HAMAP" id="MF_01007">
    <property type="entry name" value="16SrRNA_methyltr_H"/>
    <property type="match status" value="1"/>
</dbReference>
<dbReference type="InterPro" id="IPR002903">
    <property type="entry name" value="RsmH"/>
</dbReference>
<dbReference type="InterPro" id="IPR023397">
    <property type="entry name" value="SAM-dep_MeTrfase_MraW_recog"/>
</dbReference>
<dbReference type="InterPro" id="IPR029063">
    <property type="entry name" value="SAM-dependent_MTases_sf"/>
</dbReference>
<dbReference type="NCBIfam" id="TIGR00006">
    <property type="entry name" value="16S rRNA (cytosine(1402)-N(4))-methyltransferase RsmH"/>
    <property type="match status" value="1"/>
</dbReference>
<dbReference type="PANTHER" id="PTHR11265:SF0">
    <property type="entry name" value="12S RRNA N4-METHYLCYTIDINE METHYLTRANSFERASE"/>
    <property type="match status" value="1"/>
</dbReference>
<dbReference type="PANTHER" id="PTHR11265">
    <property type="entry name" value="S-ADENOSYL-METHYLTRANSFERASE MRAW"/>
    <property type="match status" value="1"/>
</dbReference>
<dbReference type="Pfam" id="PF01795">
    <property type="entry name" value="Methyltransf_5"/>
    <property type="match status" value="1"/>
</dbReference>
<dbReference type="PIRSF" id="PIRSF004486">
    <property type="entry name" value="MraW"/>
    <property type="match status" value="1"/>
</dbReference>
<dbReference type="SUPFAM" id="SSF81799">
    <property type="entry name" value="Putative methyltransferase TM0872, insert domain"/>
    <property type="match status" value="1"/>
</dbReference>
<dbReference type="SUPFAM" id="SSF53335">
    <property type="entry name" value="S-adenosyl-L-methionine-dependent methyltransferases"/>
    <property type="match status" value="1"/>
</dbReference>
<protein>
    <recommendedName>
        <fullName evidence="1">Ribosomal RNA small subunit methyltransferase H</fullName>
        <ecNumber evidence="1">2.1.1.199</ecNumber>
    </recommendedName>
    <alternativeName>
        <fullName evidence="1">16S rRNA m(4)C1402 methyltransferase</fullName>
    </alternativeName>
    <alternativeName>
        <fullName evidence="1">rRNA (cytosine-N(4)-)-methyltransferase RsmH</fullName>
    </alternativeName>
</protein>
<proteinExistence type="inferred from homology"/>
<feature type="chain" id="PRO_0000108636" description="Ribosomal RNA small subunit methyltransferase H">
    <location>
        <begin position="1"/>
        <end position="317"/>
    </location>
</feature>
<feature type="binding site" evidence="1">
    <location>
        <begin position="32"/>
        <end position="34"/>
    </location>
    <ligand>
        <name>S-adenosyl-L-methionine</name>
        <dbReference type="ChEBI" id="CHEBI:59789"/>
    </ligand>
</feature>
<feature type="binding site" evidence="1">
    <location>
        <position position="51"/>
    </location>
    <ligand>
        <name>S-adenosyl-L-methionine</name>
        <dbReference type="ChEBI" id="CHEBI:59789"/>
    </ligand>
</feature>
<feature type="binding site" evidence="1">
    <location>
        <position position="78"/>
    </location>
    <ligand>
        <name>S-adenosyl-L-methionine</name>
        <dbReference type="ChEBI" id="CHEBI:59789"/>
    </ligand>
</feature>
<feature type="binding site" evidence="1">
    <location>
        <position position="99"/>
    </location>
    <ligand>
        <name>S-adenosyl-L-methionine</name>
        <dbReference type="ChEBI" id="CHEBI:59789"/>
    </ligand>
</feature>
<feature type="binding site" evidence="1">
    <location>
        <position position="106"/>
    </location>
    <ligand>
        <name>S-adenosyl-L-methionine</name>
        <dbReference type="ChEBI" id="CHEBI:59789"/>
    </ligand>
</feature>
<organism>
    <name type="scientific">Helicobacter hepaticus (strain ATCC 51449 / 3B1)</name>
    <dbReference type="NCBI Taxonomy" id="235279"/>
    <lineage>
        <taxon>Bacteria</taxon>
        <taxon>Pseudomonadati</taxon>
        <taxon>Campylobacterota</taxon>
        <taxon>Epsilonproteobacteria</taxon>
        <taxon>Campylobacterales</taxon>
        <taxon>Helicobacteraceae</taxon>
        <taxon>Helicobacter</taxon>
    </lineage>
</organism>